<dbReference type="EC" id="2.3.1.16" evidence="1"/>
<dbReference type="EMBL" id="AE016795">
    <property type="protein sequence ID" value="AAO09472.1"/>
    <property type="molecule type" value="Genomic_DNA"/>
</dbReference>
<dbReference type="RefSeq" id="WP_011079019.1">
    <property type="nucleotide sequence ID" value="NC_004459.3"/>
</dbReference>
<dbReference type="SMR" id="Q8DDK5"/>
<dbReference type="KEGG" id="vvu:VV1_0982"/>
<dbReference type="HOGENOM" id="CLU_031026_2_3_6"/>
<dbReference type="UniPathway" id="UPA00659"/>
<dbReference type="Proteomes" id="UP000002275">
    <property type="component" value="Chromosome 1"/>
</dbReference>
<dbReference type="GO" id="GO:0005737">
    <property type="term" value="C:cytoplasm"/>
    <property type="evidence" value="ECO:0007669"/>
    <property type="project" value="UniProtKB-SubCell"/>
</dbReference>
<dbReference type="GO" id="GO:0003988">
    <property type="term" value="F:acetyl-CoA C-acyltransferase activity"/>
    <property type="evidence" value="ECO:0007669"/>
    <property type="project" value="UniProtKB-UniRule"/>
</dbReference>
<dbReference type="GO" id="GO:0006635">
    <property type="term" value="P:fatty acid beta-oxidation"/>
    <property type="evidence" value="ECO:0007669"/>
    <property type="project" value="UniProtKB-UniRule"/>
</dbReference>
<dbReference type="GO" id="GO:0010124">
    <property type="term" value="P:phenylacetate catabolic process"/>
    <property type="evidence" value="ECO:0007669"/>
    <property type="project" value="TreeGrafter"/>
</dbReference>
<dbReference type="CDD" id="cd00751">
    <property type="entry name" value="thiolase"/>
    <property type="match status" value="1"/>
</dbReference>
<dbReference type="FunFam" id="3.40.47.10:FF:000010">
    <property type="entry name" value="Acetyl-CoA acetyltransferase (Thiolase)"/>
    <property type="match status" value="1"/>
</dbReference>
<dbReference type="Gene3D" id="3.40.47.10">
    <property type="match status" value="2"/>
</dbReference>
<dbReference type="HAMAP" id="MF_01620">
    <property type="entry name" value="FadA"/>
    <property type="match status" value="1"/>
</dbReference>
<dbReference type="InterPro" id="IPR012805">
    <property type="entry name" value="FadA"/>
</dbReference>
<dbReference type="InterPro" id="IPR002155">
    <property type="entry name" value="Thiolase"/>
</dbReference>
<dbReference type="InterPro" id="IPR016039">
    <property type="entry name" value="Thiolase-like"/>
</dbReference>
<dbReference type="InterPro" id="IPR050215">
    <property type="entry name" value="Thiolase-like_sf_Thiolase"/>
</dbReference>
<dbReference type="InterPro" id="IPR020615">
    <property type="entry name" value="Thiolase_acyl_enz_int_AS"/>
</dbReference>
<dbReference type="InterPro" id="IPR020610">
    <property type="entry name" value="Thiolase_AS"/>
</dbReference>
<dbReference type="InterPro" id="IPR020617">
    <property type="entry name" value="Thiolase_C"/>
</dbReference>
<dbReference type="InterPro" id="IPR020613">
    <property type="entry name" value="Thiolase_CS"/>
</dbReference>
<dbReference type="InterPro" id="IPR020616">
    <property type="entry name" value="Thiolase_N"/>
</dbReference>
<dbReference type="NCBIfam" id="TIGR01930">
    <property type="entry name" value="AcCoA-C-Actrans"/>
    <property type="match status" value="1"/>
</dbReference>
<dbReference type="NCBIfam" id="TIGR02445">
    <property type="entry name" value="fadA"/>
    <property type="match status" value="1"/>
</dbReference>
<dbReference type="NCBIfam" id="NF006510">
    <property type="entry name" value="PRK08947.1"/>
    <property type="match status" value="1"/>
</dbReference>
<dbReference type="PANTHER" id="PTHR43853:SF11">
    <property type="entry name" value="3-KETOACYL-COA THIOLASE FADA"/>
    <property type="match status" value="1"/>
</dbReference>
<dbReference type="PANTHER" id="PTHR43853">
    <property type="entry name" value="3-KETOACYL-COA THIOLASE, PEROXISOMAL"/>
    <property type="match status" value="1"/>
</dbReference>
<dbReference type="Pfam" id="PF02803">
    <property type="entry name" value="Thiolase_C"/>
    <property type="match status" value="1"/>
</dbReference>
<dbReference type="Pfam" id="PF00108">
    <property type="entry name" value="Thiolase_N"/>
    <property type="match status" value="1"/>
</dbReference>
<dbReference type="PIRSF" id="PIRSF000429">
    <property type="entry name" value="Ac-CoA_Ac_transf"/>
    <property type="match status" value="1"/>
</dbReference>
<dbReference type="SUPFAM" id="SSF53901">
    <property type="entry name" value="Thiolase-like"/>
    <property type="match status" value="2"/>
</dbReference>
<dbReference type="PROSITE" id="PS00098">
    <property type="entry name" value="THIOLASE_1"/>
    <property type="match status" value="1"/>
</dbReference>
<dbReference type="PROSITE" id="PS00737">
    <property type="entry name" value="THIOLASE_2"/>
    <property type="match status" value="1"/>
</dbReference>
<dbReference type="PROSITE" id="PS00099">
    <property type="entry name" value="THIOLASE_3"/>
    <property type="match status" value="1"/>
</dbReference>
<organism>
    <name type="scientific">Vibrio vulnificus (strain CMCP6)</name>
    <dbReference type="NCBI Taxonomy" id="216895"/>
    <lineage>
        <taxon>Bacteria</taxon>
        <taxon>Pseudomonadati</taxon>
        <taxon>Pseudomonadota</taxon>
        <taxon>Gammaproteobacteria</taxon>
        <taxon>Vibrionales</taxon>
        <taxon>Vibrionaceae</taxon>
        <taxon>Vibrio</taxon>
    </lineage>
</organism>
<feature type="chain" id="PRO_0000206398" description="3-ketoacyl-CoA thiolase">
    <location>
        <begin position="1"/>
        <end position="387"/>
    </location>
</feature>
<feature type="active site" description="Acyl-thioester intermediate" evidence="1">
    <location>
        <position position="91"/>
    </location>
</feature>
<feature type="active site" description="Proton acceptor" evidence="1">
    <location>
        <position position="343"/>
    </location>
</feature>
<feature type="active site" description="Proton acceptor" evidence="1">
    <location>
        <position position="373"/>
    </location>
</feature>
<evidence type="ECO:0000255" key="1">
    <source>
        <dbReference type="HAMAP-Rule" id="MF_01620"/>
    </source>
</evidence>
<name>FADA_VIBVU</name>
<gene>
    <name evidence="1" type="primary">fadA</name>
    <name type="ordered locus">VV1_0982</name>
</gene>
<accession>Q8DDK5</accession>
<protein>
    <recommendedName>
        <fullName evidence="1">3-ketoacyl-CoA thiolase</fullName>
        <ecNumber evidence="1">2.3.1.16</ecNumber>
    </recommendedName>
    <alternativeName>
        <fullName evidence="1">Acetyl-CoA acyltransferase</fullName>
    </alternativeName>
    <alternativeName>
        <fullName evidence="1">Beta-ketothiolase</fullName>
    </alternativeName>
    <alternativeName>
        <fullName evidence="1">Fatty acid oxidation complex subunit beta</fullName>
    </alternativeName>
</protein>
<reference key="1">
    <citation type="submission" date="2002-12" db="EMBL/GenBank/DDBJ databases">
        <title>Complete genome sequence of Vibrio vulnificus CMCP6.</title>
        <authorList>
            <person name="Rhee J.H."/>
            <person name="Kim S.Y."/>
            <person name="Chung S.S."/>
            <person name="Kim J.J."/>
            <person name="Moon Y.H."/>
            <person name="Jeong H."/>
            <person name="Choy H.E."/>
        </authorList>
    </citation>
    <scope>NUCLEOTIDE SEQUENCE [LARGE SCALE GENOMIC DNA]</scope>
    <source>
        <strain>CMCP6</strain>
    </source>
</reference>
<sequence length="387" mass="40866">MKNVVIVDCLRTPMGRSKGGAFRHTRAEDLSAHLMKGILARNPQVNPSEIEDIYWGCVQQTLEQGFNVARNAALLAGLPIEIGAVTVNRLCGSSMQALHDGARAIMTGDAEICLIGGVEHMGHVPMNHGVDFHPGMSKHVAKAAGMMGLTAEMLGKLHGISREQQDEFAARSHARAHAATMEGRFKNEILPTEGHAADGTLFTLDHDEVIRPETTVEGLSQLRPVFDPANGTVTAGTSSALSDGASAMLIMSEEKANELGVTIRARIKGMAIAGCDPSIMGYGPVPATQKALKRAGLSIEDMDVIELNEAFAAQSLPCAKDLGLLDVMDEKVNLNGGAIALGHPLGCSGARISTTLINLMEAKDAKYGLATMCIGLGQGIATVFERP</sequence>
<comment type="function">
    <text evidence="1">Catalyzes the final step of fatty acid oxidation in which acetyl-CoA is released and the CoA ester of a fatty acid two carbons shorter is formed.</text>
</comment>
<comment type="catalytic activity">
    <reaction evidence="1">
        <text>an acyl-CoA + acetyl-CoA = a 3-oxoacyl-CoA + CoA</text>
        <dbReference type="Rhea" id="RHEA:21564"/>
        <dbReference type="ChEBI" id="CHEBI:57287"/>
        <dbReference type="ChEBI" id="CHEBI:57288"/>
        <dbReference type="ChEBI" id="CHEBI:58342"/>
        <dbReference type="ChEBI" id="CHEBI:90726"/>
        <dbReference type="EC" id="2.3.1.16"/>
    </reaction>
</comment>
<comment type="pathway">
    <text evidence="1">Lipid metabolism; fatty acid beta-oxidation.</text>
</comment>
<comment type="subunit">
    <text evidence="1">Heterotetramer of two alpha chains (FadB) and two beta chains (FadA).</text>
</comment>
<comment type="subcellular location">
    <subcellularLocation>
        <location evidence="1">Cytoplasm</location>
    </subcellularLocation>
</comment>
<comment type="similarity">
    <text evidence="1">Belongs to the thiolase-like superfamily. Thiolase family.</text>
</comment>
<keyword id="KW-0012">Acyltransferase</keyword>
<keyword id="KW-0963">Cytoplasm</keyword>
<keyword id="KW-0276">Fatty acid metabolism</keyword>
<keyword id="KW-0442">Lipid degradation</keyword>
<keyword id="KW-0443">Lipid metabolism</keyword>
<keyword id="KW-0808">Transferase</keyword>
<proteinExistence type="inferred from homology"/>